<dbReference type="EMBL" id="CP000753">
    <property type="protein sequence ID" value="ABS10097.1"/>
    <property type="molecule type" value="Genomic_DNA"/>
</dbReference>
<dbReference type="RefSeq" id="WP_006083426.1">
    <property type="nucleotide sequence ID" value="NC_009665.1"/>
</dbReference>
<dbReference type="SMR" id="A6WTF8"/>
<dbReference type="GeneID" id="11774085"/>
<dbReference type="KEGG" id="sbm:Shew185_3976"/>
<dbReference type="HOGENOM" id="CLU_080880_3_0_6"/>
<dbReference type="GO" id="GO:0005829">
    <property type="term" value="C:cytosol"/>
    <property type="evidence" value="ECO:0007669"/>
    <property type="project" value="TreeGrafter"/>
</dbReference>
<dbReference type="GO" id="GO:0008199">
    <property type="term" value="F:ferric iron binding"/>
    <property type="evidence" value="ECO:0007669"/>
    <property type="project" value="InterPro"/>
</dbReference>
<dbReference type="GO" id="GO:0008198">
    <property type="term" value="F:ferrous iron binding"/>
    <property type="evidence" value="ECO:0007669"/>
    <property type="project" value="TreeGrafter"/>
</dbReference>
<dbReference type="GO" id="GO:0016226">
    <property type="term" value="P:iron-sulfur cluster assembly"/>
    <property type="evidence" value="ECO:0007669"/>
    <property type="project" value="UniProtKB-UniRule"/>
</dbReference>
<dbReference type="CDD" id="cd00503">
    <property type="entry name" value="Frataxin"/>
    <property type="match status" value="1"/>
</dbReference>
<dbReference type="FunFam" id="3.30.920.10:FF:000005">
    <property type="entry name" value="Iron-sulfur cluster assembly protein CyaY"/>
    <property type="match status" value="1"/>
</dbReference>
<dbReference type="Gene3D" id="3.30.920.10">
    <property type="entry name" value="Frataxin/CyaY"/>
    <property type="match status" value="1"/>
</dbReference>
<dbReference type="HAMAP" id="MF_00142">
    <property type="entry name" value="CyaY"/>
    <property type="match status" value="1"/>
</dbReference>
<dbReference type="InterPro" id="IPR047584">
    <property type="entry name" value="CyaY"/>
</dbReference>
<dbReference type="InterPro" id="IPR002908">
    <property type="entry name" value="Frataxin/CyaY"/>
</dbReference>
<dbReference type="InterPro" id="IPR036524">
    <property type="entry name" value="Frataxin/CyaY_sf"/>
</dbReference>
<dbReference type="InterPro" id="IPR020895">
    <property type="entry name" value="Frataxin_CS"/>
</dbReference>
<dbReference type="NCBIfam" id="TIGR03421">
    <property type="entry name" value="FeS_CyaY"/>
    <property type="match status" value="1"/>
</dbReference>
<dbReference type="PANTHER" id="PTHR16821">
    <property type="entry name" value="FRATAXIN"/>
    <property type="match status" value="1"/>
</dbReference>
<dbReference type="PANTHER" id="PTHR16821:SF2">
    <property type="entry name" value="FRATAXIN, MITOCHONDRIAL"/>
    <property type="match status" value="1"/>
</dbReference>
<dbReference type="Pfam" id="PF01491">
    <property type="entry name" value="Frataxin_Cyay"/>
    <property type="match status" value="1"/>
</dbReference>
<dbReference type="SMART" id="SM01219">
    <property type="entry name" value="Frataxin_Cyay"/>
    <property type="match status" value="1"/>
</dbReference>
<dbReference type="SUPFAM" id="SSF55387">
    <property type="entry name" value="Frataxin/Nqo15-like"/>
    <property type="match status" value="1"/>
</dbReference>
<dbReference type="PROSITE" id="PS01344">
    <property type="entry name" value="FRATAXIN_1"/>
    <property type="match status" value="1"/>
</dbReference>
<dbReference type="PROSITE" id="PS50810">
    <property type="entry name" value="FRATAXIN_2"/>
    <property type="match status" value="1"/>
</dbReference>
<accession>A6WTF8</accession>
<proteinExistence type="inferred from homology"/>
<organism>
    <name type="scientific">Shewanella baltica (strain OS185)</name>
    <dbReference type="NCBI Taxonomy" id="402882"/>
    <lineage>
        <taxon>Bacteria</taxon>
        <taxon>Pseudomonadati</taxon>
        <taxon>Pseudomonadota</taxon>
        <taxon>Gammaproteobacteria</taxon>
        <taxon>Alteromonadales</taxon>
        <taxon>Shewanellaceae</taxon>
        <taxon>Shewanella</taxon>
    </lineage>
</organism>
<gene>
    <name evidence="1" type="primary">cyaY</name>
    <name type="ordered locus">Shew185_3976</name>
</gene>
<feature type="chain" id="PRO_1000010954" description="Iron-sulfur cluster assembly protein CyaY">
    <location>
        <begin position="1"/>
        <end position="109"/>
    </location>
</feature>
<keyword id="KW-0408">Iron</keyword>
<keyword id="KW-0479">Metal-binding</keyword>
<comment type="function">
    <text evidence="1">Involved in iron-sulfur (Fe-S) cluster assembly. May act as a regulator of Fe-S biogenesis.</text>
</comment>
<comment type="similarity">
    <text evidence="1">Belongs to the frataxin family.</text>
</comment>
<evidence type="ECO:0000255" key="1">
    <source>
        <dbReference type="HAMAP-Rule" id="MF_00142"/>
    </source>
</evidence>
<reference key="1">
    <citation type="submission" date="2007-07" db="EMBL/GenBank/DDBJ databases">
        <title>Complete sequence of chromosome of Shewanella baltica OS185.</title>
        <authorList>
            <consortium name="US DOE Joint Genome Institute"/>
            <person name="Copeland A."/>
            <person name="Lucas S."/>
            <person name="Lapidus A."/>
            <person name="Barry K."/>
            <person name="Glavina del Rio T."/>
            <person name="Dalin E."/>
            <person name="Tice H."/>
            <person name="Pitluck S."/>
            <person name="Sims D."/>
            <person name="Brettin T."/>
            <person name="Bruce D."/>
            <person name="Detter J.C."/>
            <person name="Han C."/>
            <person name="Schmutz J."/>
            <person name="Larimer F."/>
            <person name="Land M."/>
            <person name="Hauser L."/>
            <person name="Kyrpides N."/>
            <person name="Mikhailova N."/>
            <person name="Brettar I."/>
            <person name="Rodrigues J."/>
            <person name="Konstantinidis K."/>
            <person name="Tiedje J."/>
            <person name="Richardson P."/>
        </authorList>
    </citation>
    <scope>NUCLEOTIDE SEQUENCE [LARGE SCALE GENOMIC DNA]</scope>
    <source>
        <strain>OS185</strain>
    </source>
</reference>
<sequence length="109" mass="12255">MAITDTEFHQLADDMFQAIENAIETAIDEQDADVDIDASGNVLQLEFVDGSKIVINKQEPLHEIWVATRFGGYHFGFVEGKWMDGRNGGEFMPFVQESIERQGGIKLSF</sequence>
<name>CYAY_SHEB8</name>
<protein>
    <recommendedName>
        <fullName evidence="1">Iron-sulfur cluster assembly protein CyaY</fullName>
    </recommendedName>
</protein>